<comment type="function">
    <text evidence="3 5 6 7">V region of the variable domain of T cell receptor (TR) alpha chain that participates in the antigen recognition (PubMed:24600447). Alpha-beta T cell receptors are antigen specific receptors which are essential to the immune response and are present on the cell surface of T lymphocytes. Recognize peptide-major histocompatibility (MH) (pMH) complexes that are displayed by antigen presenting cells (APC), a prerequisite for efficient T cell adaptive immunity against pathogens (PubMed:25493333). Binding of alpha-beta TR to pMH complex initiates TR-CD3 clustering on the cell surface and intracellular activation of LCK that phosphorylates the ITAM motifs of CD3G, CD3D, CD3E and CD247 enabling the recruitment of ZAP70. In turn ZAP70 phosphorylates LAT, which recruits numerous signaling molecules to form the LAT signalosome. The LAT signalosome propagates signal branching to three major signaling pathways, the calcium, the mitogen-activated protein kinase (MAPK) kinase and the nuclear factor NF-kappa-B (NF-kB) pathways, leading to the mobilization of transcription factors that are critical for gene expression and essential for T cell growth and differentiation (PubMed:23524462). The T cell repertoire is generated in the thymus, by V-(D)-J rearrangement. This repertoire is then shaped by intrathymic selection events to generate a peripheral T cell pool of self-MH restricted, non-autoaggressive T cells. Post-thymic interaction of alpha-beta TR with the pMH complexes shapes TR structural and functional avidity (PubMed:15040585).</text>
</comment>
<comment type="subunit">
    <text evidence="4">Alpha-beta TR is a heterodimer composed of an alpha and beta chain; disulfide-linked. The alpha-beta TR is associated with the transmembrane signaling CD3 coreceptor proteins to form the TR-CD3 (TcR or TCR). The assembly of alpha-beta TR heterodimers with CD3 occurs in the endoplasmic reticulum where a single alpha-beta TR heterodimer associates with one CD3D-CD3E heterodimer, one CD3G-CD3E heterodimer and one CD247 homodimer forming a stable octameric structure. CD3D-CD3E and CD3G-CD3E heterodimers preferentially associate with TR alpha and TR beta chains, respectively. The association of the CD247 homodimer is the last step of TcR assembly in the endoplasmic reticulum and is required for transport to the cell surface.</text>
</comment>
<comment type="subcellular location">
    <subcellularLocation>
        <location evidence="4">Cell membrane</location>
    </subcellularLocation>
</comment>
<comment type="polymorphism">
    <text evidence="9">There are several alleles. The sequence shown is that of IMGT allele TRAV39*01.</text>
</comment>
<feature type="signal peptide" evidence="1">
    <location>
        <begin position="1"/>
        <end position="18"/>
    </location>
</feature>
<feature type="chain" id="PRO_5002091830" description="T cell receptor alpha variable 39" evidence="1">
    <location>
        <begin position="19"/>
        <end position="110"/>
    </location>
</feature>
<feature type="domain" description="Ig-like" evidence="2">
    <location>
        <begin position="19"/>
        <end position="110" status="greater than"/>
    </location>
</feature>
<feature type="glycosylation site" description="N-linked (GlcNAc...) asparagine" evidence="1">
    <location>
        <position position="36"/>
    </location>
</feature>
<feature type="glycosylation site" description="N-linked (GlcNAc...) asparagine" evidence="1">
    <location>
        <position position="42"/>
    </location>
</feature>
<feature type="disulfide bond" evidence="2">
    <location>
        <begin position="41"/>
        <end position="107"/>
    </location>
</feature>
<feature type="non-terminal residue">
    <location>
        <position position="110"/>
    </location>
</feature>
<protein>
    <recommendedName>
        <fullName evidence="8">T cell receptor alpha variable 39</fullName>
    </recommendedName>
</protein>
<accession>A0A0B4J263</accession>
<dbReference type="EMBL" id="AC245470">
    <property type="status" value="NOT_ANNOTATED_CDS"/>
    <property type="molecule type" value="Genomic_DNA"/>
</dbReference>
<dbReference type="SMR" id="A0A0B4J263"/>
<dbReference type="FunCoup" id="A0A0B4J263">
    <property type="interactions" value="314"/>
</dbReference>
<dbReference type="IMGT_GENE-DB" id="TRAV39"/>
<dbReference type="GlyCosmos" id="A0A0B4J263">
    <property type="glycosylation" value="2 sites, No reported glycans"/>
</dbReference>
<dbReference type="GlyGen" id="A0A0B4J263">
    <property type="glycosylation" value="2 sites"/>
</dbReference>
<dbReference type="BioMuta" id="TRAV39"/>
<dbReference type="Ensembl" id="ENST00000390466.1">
    <property type="protein sequence ID" value="ENSP00000450865.1"/>
    <property type="gene ID" value="ENSG00000211818.1"/>
</dbReference>
<dbReference type="AGR" id="HGNC:12139"/>
<dbReference type="GeneCards" id="TRAV39"/>
<dbReference type="HGNC" id="HGNC:12139">
    <property type="gene designation" value="TRAV39"/>
</dbReference>
<dbReference type="HPA" id="ENSG00000211818">
    <property type="expression patterns" value="Tissue enriched (lymphoid)"/>
</dbReference>
<dbReference type="neXtProt" id="NX_A0A0B4J263"/>
<dbReference type="OpenTargets" id="ENSG00000211818"/>
<dbReference type="VEuPathDB" id="HostDB:ENSG00000211818"/>
<dbReference type="GeneTree" id="ENSGT00940000163224"/>
<dbReference type="HOGENOM" id="CLU_077975_8_3_1"/>
<dbReference type="InParanoid" id="A0A0B4J263"/>
<dbReference type="OMA" id="TIYCNYS"/>
<dbReference type="OrthoDB" id="8947657at2759"/>
<dbReference type="PAN-GO" id="A0A0B4J263">
    <property type="GO annotations" value="1 GO annotation based on evolutionary models"/>
</dbReference>
<dbReference type="PhylomeDB" id="A0A0B4J263"/>
<dbReference type="PathwayCommons" id="A0A0B4J263"/>
<dbReference type="ChiTaRS" id="TRAV39">
    <property type="organism name" value="human"/>
</dbReference>
<dbReference type="Pharos" id="A0A0B4J263">
    <property type="development level" value="Tdark"/>
</dbReference>
<dbReference type="PRO" id="PR:A0A0B4J263"/>
<dbReference type="Proteomes" id="UP000005640">
    <property type="component" value="Chromosome 14"/>
</dbReference>
<dbReference type="RNAct" id="A0A0B4J263">
    <property type="molecule type" value="protein"/>
</dbReference>
<dbReference type="Bgee" id="ENSG00000211818">
    <property type="expression patterns" value="Expressed in buccal mucosa cell and 111 other cell types or tissues"/>
</dbReference>
<dbReference type="GO" id="GO:0042101">
    <property type="term" value="C:T cell receptor complex"/>
    <property type="evidence" value="ECO:0007669"/>
    <property type="project" value="UniProtKB-KW"/>
</dbReference>
<dbReference type="GO" id="GO:0002250">
    <property type="term" value="P:adaptive immune response"/>
    <property type="evidence" value="ECO:0007669"/>
    <property type="project" value="UniProtKB-KW"/>
</dbReference>
<dbReference type="GO" id="GO:0009617">
    <property type="term" value="P:response to bacterium"/>
    <property type="evidence" value="ECO:0000318"/>
    <property type="project" value="GO_Central"/>
</dbReference>
<dbReference type="Gene3D" id="2.60.40.10">
    <property type="entry name" value="Immunoglobulins"/>
    <property type="match status" value="1"/>
</dbReference>
<dbReference type="InterPro" id="IPR007110">
    <property type="entry name" value="Ig-like_dom"/>
</dbReference>
<dbReference type="InterPro" id="IPR036179">
    <property type="entry name" value="Ig-like_dom_sf"/>
</dbReference>
<dbReference type="InterPro" id="IPR013783">
    <property type="entry name" value="Ig-like_fold"/>
</dbReference>
<dbReference type="InterPro" id="IPR013106">
    <property type="entry name" value="Ig_V-set"/>
</dbReference>
<dbReference type="InterPro" id="IPR051896">
    <property type="entry name" value="TCR_alpha_variable"/>
</dbReference>
<dbReference type="PANTHER" id="PTHR19339:SF10">
    <property type="entry name" value="IG-LIKE DOMAIN-CONTAINING PROTEIN-RELATED"/>
    <property type="match status" value="1"/>
</dbReference>
<dbReference type="PANTHER" id="PTHR19339">
    <property type="entry name" value="T CELL RECEPTOR ALPHA VARIABLE 39"/>
    <property type="match status" value="1"/>
</dbReference>
<dbReference type="Pfam" id="PF07686">
    <property type="entry name" value="V-set"/>
    <property type="match status" value="1"/>
</dbReference>
<dbReference type="SUPFAM" id="SSF48726">
    <property type="entry name" value="Immunoglobulin"/>
    <property type="match status" value="1"/>
</dbReference>
<dbReference type="PROSITE" id="PS50835">
    <property type="entry name" value="IG_LIKE"/>
    <property type="match status" value="1"/>
</dbReference>
<proteinExistence type="inferred from homology"/>
<evidence type="ECO:0000255" key="1"/>
<evidence type="ECO:0000255" key="2">
    <source>
        <dbReference type="PROSITE-ProRule" id="PRU00114"/>
    </source>
</evidence>
<evidence type="ECO:0000303" key="3">
    <source>
    </source>
</evidence>
<evidence type="ECO:0000303" key="4">
    <source>
    </source>
</evidence>
<evidence type="ECO:0000303" key="5">
    <source>
    </source>
</evidence>
<evidence type="ECO:0000303" key="6">
    <source>
    </source>
</evidence>
<evidence type="ECO:0000303" key="7">
    <source>
    </source>
</evidence>
<evidence type="ECO:0000303" key="8">
    <source ref="2"/>
</evidence>
<evidence type="ECO:0000305" key="9"/>
<keyword id="KW-1064">Adaptive immunity</keyword>
<keyword id="KW-1003">Cell membrane</keyword>
<keyword id="KW-1015">Disulfide bond</keyword>
<keyword id="KW-0325">Glycoprotein</keyword>
<keyword id="KW-0391">Immunity</keyword>
<keyword id="KW-0393">Immunoglobulin domain</keyword>
<keyword id="KW-0472">Membrane</keyword>
<keyword id="KW-0675">Receptor</keyword>
<keyword id="KW-1185">Reference proteome</keyword>
<keyword id="KW-0732">Signal</keyword>
<keyword id="KW-1279">T cell receptor</keyword>
<organism>
    <name type="scientific">Homo sapiens</name>
    <name type="common">Human</name>
    <dbReference type="NCBI Taxonomy" id="9606"/>
    <lineage>
        <taxon>Eukaryota</taxon>
        <taxon>Metazoa</taxon>
        <taxon>Chordata</taxon>
        <taxon>Craniata</taxon>
        <taxon>Vertebrata</taxon>
        <taxon>Euteleostomi</taxon>
        <taxon>Mammalia</taxon>
        <taxon>Eutheria</taxon>
        <taxon>Euarchontoglires</taxon>
        <taxon>Primates</taxon>
        <taxon>Haplorrhini</taxon>
        <taxon>Catarrhini</taxon>
        <taxon>Hominidae</taxon>
        <taxon>Homo</taxon>
    </lineage>
</organism>
<name>TVA39_HUMAN</name>
<gene>
    <name evidence="8" type="primary">TRAV39</name>
</gene>
<sequence>MKKLLAMILWLQLDRLSGELKVEQNPLFLSMQEGKNYTIYCNYSTTSDRLYWYRQDPGKSLESLFVLLSNGAVKQEGRLMASLDTKARLSTLHITAAVHDLSATYFCAVD</sequence>
<reference key="1">
    <citation type="journal article" date="2003" name="Nature">
        <title>The DNA sequence and analysis of human chromosome 14.</title>
        <authorList>
            <person name="Heilig R."/>
            <person name="Eckenberg R."/>
            <person name="Petit J.-L."/>
            <person name="Fonknechten N."/>
            <person name="Da Silva C."/>
            <person name="Cattolico L."/>
            <person name="Levy M."/>
            <person name="Barbe V."/>
            <person name="De Berardinis V."/>
            <person name="Ureta-Vidal A."/>
            <person name="Pelletier E."/>
            <person name="Vico V."/>
            <person name="Anthouard V."/>
            <person name="Rowen L."/>
            <person name="Madan A."/>
            <person name="Qin S."/>
            <person name="Sun H."/>
            <person name="Du H."/>
            <person name="Pepin K."/>
            <person name="Artiguenave F."/>
            <person name="Robert C."/>
            <person name="Cruaud C."/>
            <person name="Bruels T."/>
            <person name="Jaillon O."/>
            <person name="Friedlander L."/>
            <person name="Samson G."/>
            <person name="Brottier P."/>
            <person name="Cure S."/>
            <person name="Segurens B."/>
            <person name="Aniere F."/>
            <person name="Samain S."/>
            <person name="Crespeau H."/>
            <person name="Abbasi N."/>
            <person name="Aiach N."/>
            <person name="Boscus D."/>
            <person name="Dickhoff R."/>
            <person name="Dors M."/>
            <person name="Dubois I."/>
            <person name="Friedman C."/>
            <person name="Gouyvenoux M."/>
            <person name="James R."/>
            <person name="Madan A."/>
            <person name="Mairey-Estrada B."/>
            <person name="Mangenot S."/>
            <person name="Martins N."/>
            <person name="Menard M."/>
            <person name="Oztas S."/>
            <person name="Ratcliffe A."/>
            <person name="Shaffer T."/>
            <person name="Trask B."/>
            <person name="Vacherie B."/>
            <person name="Bellemere C."/>
            <person name="Belser C."/>
            <person name="Besnard-Gonnet M."/>
            <person name="Bartol-Mavel D."/>
            <person name="Boutard M."/>
            <person name="Briez-Silla S."/>
            <person name="Combette S."/>
            <person name="Dufosse-Laurent V."/>
            <person name="Ferron C."/>
            <person name="Lechaplais C."/>
            <person name="Louesse C."/>
            <person name="Muselet D."/>
            <person name="Magdelenat G."/>
            <person name="Pateau E."/>
            <person name="Petit E."/>
            <person name="Sirvain-Trukniewicz P."/>
            <person name="Trybou A."/>
            <person name="Vega-Czarny N."/>
            <person name="Bataille E."/>
            <person name="Bluet E."/>
            <person name="Bordelais I."/>
            <person name="Dubois M."/>
            <person name="Dumont C."/>
            <person name="Guerin T."/>
            <person name="Haffray S."/>
            <person name="Hammadi R."/>
            <person name="Muanga J."/>
            <person name="Pellouin V."/>
            <person name="Robert D."/>
            <person name="Wunderle E."/>
            <person name="Gauguet G."/>
            <person name="Roy A."/>
            <person name="Sainte-Marthe L."/>
            <person name="Verdier J."/>
            <person name="Verdier-Discala C."/>
            <person name="Hillier L.W."/>
            <person name="Fulton L."/>
            <person name="McPherson J."/>
            <person name="Matsuda F."/>
            <person name="Wilson R."/>
            <person name="Scarpelli C."/>
            <person name="Gyapay G."/>
            <person name="Wincker P."/>
            <person name="Saurin W."/>
            <person name="Quetier F."/>
            <person name="Waterston R."/>
            <person name="Hood L."/>
            <person name="Weissenbach J."/>
        </authorList>
    </citation>
    <scope>NUCLEOTIDE SEQUENCE [LARGE SCALE GENOMIC DNA] (IMGT ALLELE TRAV39*01)</scope>
</reference>
<reference key="2">
    <citation type="book" date="2001" name="The T Cell Receptor FactsBook.">
        <title>The T Cell Receptor FactsBook.</title>
        <editorList>
            <person name="Lefranc M.P."/>
            <person name="Lefranc G."/>
        </editorList>
        <authorList>
            <person name="Lefranc M.P."/>
            <person name="Lefranc G."/>
        </authorList>
    </citation>
    <scope>NOMENCLATURE</scope>
</reference>
<reference key="3">
    <citation type="journal article" date="2004" name="Nat. Rev. Immunol.">
        <title>The many important facets of T-cell repertoire diversity.</title>
        <authorList>
            <person name="Nikolich-Zugich J."/>
            <person name="Slifka M.K."/>
            <person name="Messaoudi I."/>
        </authorList>
    </citation>
    <scope>REVIEW ON T CELL REPERTOIRE DIVERSITY</scope>
</reference>
<reference key="4">
    <citation type="journal article" date="2010" name="Cold Spring Harb. Perspect. Biol.">
        <title>Structural biology of the T-cell receptor: insights into receptor assembly, ligand recognition, and initiation of signaling.</title>
        <authorList>
            <person name="Wucherpfennig K.W."/>
            <person name="Gagnon E."/>
            <person name="Call M.J."/>
            <person name="Huseby E.S."/>
            <person name="Call M.E."/>
        </authorList>
    </citation>
    <scope>REVIEW ON T CELL RECEPTOR-CD3 COMPLEX ASSEMBLY</scope>
    <scope>SUBCELLULAR LOCATION</scope>
</reference>
<reference key="5">
    <citation type="journal article" date="2013" name="Nat. Rev. Immunol.">
        <title>T cell receptor signalling networks: branched, diversified and bounded.</title>
        <authorList>
            <person name="Brownlie R.J."/>
            <person name="Zamoyska R."/>
        </authorList>
    </citation>
    <scope>REVIEW ON T CELL RECEPTOR SIGNALING</scope>
</reference>
<reference key="6">
    <citation type="journal article" date="2014" name="Front. Immunol.">
        <title>Immunoglobulin and T Cell Receptor Genes: IMGT((R)) and the Birth and Rise of Immunoinformatics.</title>
        <authorList>
            <person name="Lefranc M.P."/>
        </authorList>
    </citation>
    <scope>NOMENCLATURE</scope>
</reference>
<reference key="7">
    <citation type="journal article" date="2015" name="Annu. Rev. Immunol.">
        <title>T cell antigen receptor recognition of antigen-presenting molecules.</title>
        <authorList>
            <person name="Rossjohn J."/>
            <person name="Gras S."/>
            <person name="Miles J.J."/>
            <person name="Turner S.J."/>
            <person name="Godfrey D.I."/>
            <person name="McCluskey J."/>
        </authorList>
    </citation>
    <scope>REVIEW ON FUNCTION</scope>
</reference>